<keyword id="KW-0378">Hydrolase</keyword>
<keyword id="KW-0479">Metal-binding</keyword>
<keyword id="KW-0862">Zinc</keyword>
<evidence type="ECO:0000255" key="1">
    <source>
        <dbReference type="HAMAP-Rule" id="MF_01374"/>
    </source>
</evidence>
<accession>B8HMJ9</accession>
<proteinExistence type="inferred from homology"/>
<name>GLO2_CYAP4</name>
<sequence length="256" mass="29054">MQIDRLPVLSDNYIFLVLDPERRQAAVVDPAVAAPVLERLRSLQFQLVAIFNTHHHHDHVGGNQELLQHFPTAVVYGGAEDRGRIPGQQVFLQPGDRVNFAQRTAEVLFVPGHTRAHIAYYFPPVNHSSGELFCGDTLFAGGCGRLFEGTPAQMVNSLNQLRQLPDNTRVWCAHEYTLKNLQFALTIEPENVELQTRLAQVYLARQHFQPTVPSELGLEKRTNPFLRWDVPQVQQSVKGQDGIQTFTRLRGRKDQF</sequence>
<organism>
    <name type="scientific">Cyanothece sp. (strain PCC 7425 / ATCC 29141)</name>
    <dbReference type="NCBI Taxonomy" id="395961"/>
    <lineage>
        <taxon>Bacteria</taxon>
        <taxon>Bacillati</taxon>
        <taxon>Cyanobacteriota</taxon>
        <taxon>Cyanophyceae</taxon>
        <taxon>Gomontiellales</taxon>
        <taxon>Cyanothecaceae</taxon>
        <taxon>Cyanothece</taxon>
    </lineage>
</organism>
<dbReference type="EC" id="3.1.2.6" evidence="1"/>
<dbReference type="EMBL" id="CP001344">
    <property type="protein sequence ID" value="ACL43614.1"/>
    <property type="molecule type" value="Genomic_DNA"/>
</dbReference>
<dbReference type="SMR" id="B8HMJ9"/>
<dbReference type="STRING" id="395961.Cyan7425_1235"/>
<dbReference type="KEGG" id="cyn:Cyan7425_1235"/>
<dbReference type="eggNOG" id="COG0491">
    <property type="taxonomic scope" value="Bacteria"/>
</dbReference>
<dbReference type="HOGENOM" id="CLU_030571_4_1_3"/>
<dbReference type="OrthoDB" id="9802897at2"/>
<dbReference type="UniPathway" id="UPA00619">
    <property type="reaction ID" value="UER00676"/>
</dbReference>
<dbReference type="GO" id="GO:0004416">
    <property type="term" value="F:hydroxyacylglutathione hydrolase activity"/>
    <property type="evidence" value="ECO:0007669"/>
    <property type="project" value="UniProtKB-UniRule"/>
</dbReference>
<dbReference type="GO" id="GO:0046872">
    <property type="term" value="F:metal ion binding"/>
    <property type="evidence" value="ECO:0007669"/>
    <property type="project" value="UniProtKB-KW"/>
</dbReference>
<dbReference type="GO" id="GO:0019243">
    <property type="term" value="P:methylglyoxal catabolic process to D-lactate via S-lactoyl-glutathione"/>
    <property type="evidence" value="ECO:0007669"/>
    <property type="project" value="InterPro"/>
</dbReference>
<dbReference type="CDD" id="cd07723">
    <property type="entry name" value="hydroxyacylglutathione_hydrolase_MBL-fold"/>
    <property type="match status" value="1"/>
</dbReference>
<dbReference type="Gene3D" id="3.60.15.10">
    <property type="entry name" value="Ribonuclease Z/Hydroxyacylglutathione hydrolase-like"/>
    <property type="match status" value="1"/>
</dbReference>
<dbReference type="HAMAP" id="MF_01374">
    <property type="entry name" value="Glyoxalase_2"/>
    <property type="match status" value="1"/>
</dbReference>
<dbReference type="InterPro" id="IPR035680">
    <property type="entry name" value="Clx_II_MBL"/>
</dbReference>
<dbReference type="InterPro" id="IPR050110">
    <property type="entry name" value="Glyoxalase_II_hydrolase"/>
</dbReference>
<dbReference type="InterPro" id="IPR032282">
    <property type="entry name" value="HAGH_C"/>
</dbReference>
<dbReference type="InterPro" id="IPR017782">
    <property type="entry name" value="Hydroxyacylglutathione_Hdrlase"/>
</dbReference>
<dbReference type="InterPro" id="IPR001279">
    <property type="entry name" value="Metallo-B-lactamas"/>
</dbReference>
<dbReference type="InterPro" id="IPR036866">
    <property type="entry name" value="RibonucZ/Hydroxyglut_hydro"/>
</dbReference>
<dbReference type="NCBIfam" id="TIGR03413">
    <property type="entry name" value="GSH_gloB"/>
    <property type="match status" value="1"/>
</dbReference>
<dbReference type="PANTHER" id="PTHR43705">
    <property type="entry name" value="HYDROXYACYLGLUTATHIONE HYDROLASE"/>
    <property type="match status" value="1"/>
</dbReference>
<dbReference type="PANTHER" id="PTHR43705:SF1">
    <property type="entry name" value="HYDROXYACYLGLUTATHIONE HYDROLASE GLOB"/>
    <property type="match status" value="1"/>
</dbReference>
<dbReference type="Pfam" id="PF16123">
    <property type="entry name" value="HAGH_C"/>
    <property type="match status" value="1"/>
</dbReference>
<dbReference type="Pfam" id="PF00753">
    <property type="entry name" value="Lactamase_B"/>
    <property type="match status" value="1"/>
</dbReference>
<dbReference type="PIRSF" id="PIRSF005457">
    <property type="entry name" value="Glx"/>
    <property type="match status" value="1"/>
</dbReference>
<dbReference type="SMART" id="SM00849">
    <property type="entry name" value="Lactamase_B"/>
    <property type="match status" value="1"/>
</dbReference>
<dbReference type="SUPFAM" id="SSF56281">
    <property type="entry name" value="Metallo-hydrolase/oxidoreductase"/>
    <property type="match status" value="1"/>
</dbReference>
<gene>
    <name evidence="1" type="primary">gloB</name>
    <name type="ordered locus">Cyan7425_1235</name>
</gene>
<comment type="function">
    <text evidence="1">Thiolesterase that catalyzes the hydrolysis of S-D-lactoyl-glutathione to form glutathione and D-lactic acid.</text>
</comment>
<comment type="catalytic activity">
    <reaction evidence="1">
        <text>an S-(2-hydroxyacyl)glutathione + H2O = a 2-hydroxy carboxylate + glutathione + H(+)</text>
        <dbReference type="Rhea" id="RHEA:21864"/>
        <dbReference type="ChEBI" id="CHEBI:15377"/>
        <dbReference type="ChEBI" id="CHEBI:15378"/>
        <dbReference type="ChEBI" id="CHEBI:57925"/>
        <dbReference type="ChEBI" id="CHEBI:58896"/>
        <dbReference type="ChEBI" id="CHEBI:71261"/>
        <dbReference type="EC" id="3.1.2.6"/>
    </reaction>
</comment>
<comment type="cofactor">
    <cofactor evidence="1">
        <name>Zn(2+)</name>
        <dbReference type="ChEBI" id="CHEBI:29105"/>
    </cofactor>
    <text evidence="1">Binds 2 Zn(2+) ions per subunit.</text>
</comment>
<comment type="pathway">
    <text evidence="1">Secondary metabolite metabolism; methylglyoxal degradation; (R)-lactate from methylglyoxal: step 2/2.</text>
</comment>
<comment type="subunit">
    <text evidence="1">Monomer.</text>
</comment>
<comment type="similarity">
    <text evidence="1">Belongs to the metallo-beta-lactamase superfamily. Glyoxalase II family.</text>
</comment>
<feature type="chain" id="PRO_1000184176" description="Hydroxyacylglutathione hydrolase">
    <location>
        <begin position="1"/>
        <end position="256"/>
    </location>
</feature>
<feature type="binding site" evidence="1">
    <location>
        <position position="54"/>
    </location>
    <ligand>
        <name>Zn(2+)</name>
        <dbReference type="ChEBI" id="CHEBI:29105"/>
        <label>1</label>
    </ligand>
</feature>
<feature type="binding site" evidence="1">
    <location>
        <position position="56"/>
    </location>
    <ligand>
        <name>Zn(2+)</name>
        <dbReference type="ChEBI" id="CHEBI:29105"/>
        <label>1</label>
    </ligand>
</feature>
<feature type="binding site" evidence="1">
    <location>
        <position position="58"/>
    </location>
    <ligand>
        <name>Zn(2+)</name>
        <dbReference type="ChEBI" id="CHEBI:29105"/>
        <label>2</label>
    </ligand>
</feature>
<feature type="binding site" evidence="1">
    <location>
        <position position="59"/>
    </location>
    <ligand>
        <name>Zn(2+)</name>
        <dbReference type="ChEBI" id="CHEBI:29105"/>
        <label>2</label>
    </ligand>
</feature>
<feature type="binding site" evidence="1">
    <location>
        <position position="113"/>
    </location>
    <ligand>
        <name>Zn(2+)</name>
        <dbReference type="ChEBI" id="CHEBI:29105"/>
        <label>1</label>
    </ligand>
</feature>
<feature type="binding site" evidence="1">
    <location>
        <position position="136"/>
    </location>
    <ligand>
        <name>Zn(2+)</name>
        <dbReference type="ChEBI" id="CHEBI:29105"/>
        <label>1</label>
    </ligand>
</feature>
<feature type="binding site" evidence="1">
    <location>
        <position position="136"/>
    </location>
    <ligand>
        <name>Zn(2+)</name>
        <dbReference type="ChEBI" id="CHEBI:29105"/>
        <label>2</label>
    </ligand>
</feature>
<feature type="binding site" evidence="1">
    <location>
        <position position="174"/>
    </location>
    <ligand>
        <name>Zn(2+)</name>
        <dbReference type="ChEBI" id="CHEBI:29105"/>
        <label>2</label>
    </ligand>
</feature>
<protein>
    <recommendedName>
        <fullName evidence="1">Hydroxyacylglutathione hydrolase</fullName>
        <ecNumber evidence="1">3.1.2.6</ecNumber>
    </recommendedName>
    <alternativeName>
        <fullName evidence="1">Glyoxalase II</fullName>
        <shortName evidence="1">Glx II</shortName>
    </alternativeName>
</protein>
<reference key="1">
    <citation type="journal article" date="2011" name="MBio">
        <title>Novel metabolic attributes of the genus Cyanothece, comprising a group of unicellular nitrogen-fixing Cyanobacteria.</title>
        <authorList>
            <person name="Bandyopadhyay A."/>
            <person name="Elvitigala T."/>
            <person name="Welsh E."/>
            <person name="Stockel J."/>
            <person name="Liberton M."/>
            <person name="Min H."/>
            <person name="Sherman L.A."/>
            <person name="Pakrasi H.B."/>
        </authorList>
    </citation>
    <scope>NUCLEOTIDE SEQUENCE [LARGE SCALE GENOMIC DNA]</scope>
    <source>
        <strain>PCC 7425 / ATCC 29141</strain>
    </source>
</reference>